<dbReference type="EC" id="3.6.1.9" evidence="1"/>
<dbReference type="EMBL" id="CP000813">
    <property type="protein sequence ID" value="ABV63108.1"/>
    <property type="molecule type" value="Genomic_DNA"/>
</dbReference>
<dbReference type="RefSeq" id="WP_012010768.1">
    <property type="nucleotide sequence ID" value="NZ_VEIS01000010.1"/>
</dbReference>
<dbReference type="SMR" id="A8FFU1"/>
<dbReference type="STRING" id="315750.BPUM_2445"/>
<dbReference type="GeneID" id="5621709"/>
<dbReference type="KEGG" id="bpu:BPUM_2445"/>
<dbReference type="eggNOG" id="COG0424">
    <property type="taxonomic scope" value="Bacteria"/>
</dbReference>
<dbReference type="HOGENOM" id="CLU_040416_0_0_9"/>
<dbReference type="OrthoDB" id="9807767at2"/>
<dbReference type="Proteomes" id="UP000001355">
    <property type="component" value="Chromosome"/>
</dbReference>
<dbReference type="GO" id="GO:0005737">
    <property type="term" value="C:cytoplasm"/>
    <property type="evidence" value="ECO:0007669"/>
    <property type="project" value="UniProtKB-SubCell"/>
</dbReference>
<dbReference type="GO" id="GO:0036218">
    <property type="term" value="F:dTTP diphosphatase activity"/>
    <property type="evidence" value="ECO:0007669"/>
    <property type="project" value="RHEA"/>
</dbReference>
<dbReference type="GO" id="GO:0036221">
    <property type="term" value="F:UTP diphosphatase activity"/>
    <property type="evidence" value="ECO:0007669"/>
    <property type="project" value="RHEA"/>
</dbReference>
<dbReference type="GO" id="GO:0009117">
    <property type="term" value="P:nucleotide metabolic process"/>
    <property type="evidence" value="ECO:0007669"/>
    <property type="project" value="UniProtKB-KW"/>
</dbReference>
<dbReference type="CDD" id="cd00555">
    <property type="entry name" value="Maf"/>
    <property type="match status" value="1"/>
</dbReference>
<dbReference type="FunFam" id="3.90.950.10:FF:000005">
    <property type="entry name" value="7-methyl-GTP pyrophosphatase"/>
    <property type="match status" value="1"/>
</dbReference>
<dbReference type="Gene3D" id="3.90.950.10">
    <property type="match status" value="1"/>
</dbReference>
<dbReference type="HAMAP" id="MF_00528">
    <property type="entry name" value="Maf"/>
    <property type="match status" value="1"/>
</dbReference>
<dbReference type="InterPro" id="IPR029001">
    <property type="entry name" value="ITPase-like_fam"/>
</dbReference>
<dbReference type="InterPro" id="IPR003697">
    <property type="entry name" value="Maf-like"/>
</dbReference>
<dbReference type="NCBIfam" id="TIGR00172">
    <property type="entry name" value="maf"/>
    <property type="match status" value="1"/>
</dbReference>
<dbReference type="PANTHER" id="PTHR43213">
    <property type="entry name" value="BIFUNCTIONAL DTTP/UTP PYROPHOSPHATASE/METHYLTRANSFERASE PROTEIN-RELATED"/>
    <property type="match status" value="1"/>
</dbReference>
<dbReference type="PANTHER" id="PTHR43213:SF5">
    <property type="entry name" value="BIFUNCTIONAL DTTP_UTP PYROPHOSPHATASE_METHYLTRANSFERASE PROTEIN-RELATED"/>
    <property type="match status" value="1"/>
</dbReference>
<dbReference type="Pfam" id="PF02545">
    <property type="entry name" value="Maf"/>
    <property type="match status" value="1"/>
</dbReference>
<dbReference type="PIRSF" id="PIRSF006305">
    <property type="entry name" value="Maf"/>
    <property type="match status" value="1"/>
</dbReference>
<dbReference type="SUPFAM" id="SSF52972">
    <property type="entry name" value="ITPase-like"/>
    <property type="match status" value="1"/>
</dbReference>
<evidence type="ECO:0000255" key="1">
    <source>
        <dbReference type="HAMAP-Rule" id="MF_00528"/>
    </source>
</evidence>
<reference key="1">
    <citation type="journal article" date="2007" name="PLoS ONE">
        <title>Paradoxical DNA repair and peroxide resistance gene conservation in Bacillus pumilus SAFR-032.</title>
        <authorList>
            <person name="Gioia J."/>
            <person name="Yerrapragada S."/>
            <person name="Qin X."/>
            <person name="Jiang H."/>
            <person name="Igboeli O.C."/>
            <person name="Muzny D."/>
            <person name="Dugan-Rocha S."/>
            <person name="Ding Y."/>
            <person name="Hawes A."/>
            <person name="Liu W."/>
            <person name="Perez L."/>
            <person name="Kovar C."/>
            <person name="Dinh H."/>
            <person name="Lee S."/>
            <person name="Nazareth L."/>
            <person name="Blyth P."/>
            <person name="Holder M."/>
            <person name="Buhay C."/>
            <person name="Tirumalai M.R."/>
            <person name="Liu Y."/>
            <person name="Dasgupta I."/>
            <person name="Bokhetache L."/>
            <person name="Fujita M."/>
            <person name="Karouia F."/>
            <person name="Eswara Moorthy P."/>
            <person name="Siefert J."/>
            <person name="Uzman A."/>
            <person name="Buzumbo P."/>
            <person name="Verma A."/>
            <person name="Zwiya H."/>
            <person name="McWilliams B.D."/>
            <person name="Olowu A."/>
            <person name="Clinkenbeard K.D."/>
            <person name="Newcombe D."/>
            <person name="Golebiewski L."/>
            <person name="Petrosino J.F."/>
            <person name="Nicholson W.L."/>
            <person name="Fox G.E."/>
            <person name="Venkateswaran K."/>
            <person name="Highlander S.K."/>
            <person name="Weinstock G.M."/>
        </authorList>
    </citation>
    <scope>NUCLEOTIDE SEQUENCE [LARGE SCALE GENOMIC DNA]</scope>
    <source>
        <strain>SAFR-032</strain>
    </source>
</reference>
<keyword id="KW-0963">Cytoplasm</keyword>
<keyword id="KW-0378">Hydrolase</keyword>
<keyword id="KW-0546">Nucleotide metabolism</keyword>
<comment type="function">
    <text evidence="1">Nucleoside triphosphate pyrophosphatase that hydrolyzes dTTP and UTP. May have a dual role in cell division arrest and in preventing the incorporation of modified nucleotides into cellular nucleic acids.</text>
</comment>
<comment type="catalytic activity">
    <reaction evidence="1">
        <text>dTTP + H2O = dTMP + diphosphate + H(+)</text>
        <dbReference type="Rhea" id="RHEA:28534"/>
        <dbReference type="ChEBI" id="CHEBI:15377"/>
        <dbReference type="ChEBI" id="CHEBI:15378"/>
        <dbReference type="ChEBI" id="CHEBI:33019"/>
        <dbReference type="ChEBI" id="CHEBI:37568"/>
        <dbReference type="ChEBI" id="CHEBI:63528"/>
        <dbReference type="EC" id="3.6.1.9"/>
    </reaction>
</comment>
<comment type="catalytic activity">
    <reaction evidence="1">
        <text>UTP + H2O = UMP + diphosphate + H(+)</text>
        <dbReference type="Rhea" id="RHEA:29395"/>
        <dbReference type="ChEBI" id="CHEBI:15377"/>
        <dbReference type="ChEBI" id="CHEBI:15378"/>
        <dbReference type="ChEBI" id="CHEBI:33019"/>
        <dbReference type="ChEBI" id="CHEBI:46398"/>
        <dbReference type="ChEBI" id="CHEBI:57865"/>
        <dbReference type="EC" id="3.6.1.9"/>
    </reaction>
</comment>
<comment type="cofactor">
    <cofactor evidence="1">
        <name>a divalent metal cation</name>
        <dbReference type="ChEBI" id="CHEBI:60240"/>
    </cofactor>
</comment>
<comment type="subcellular location">
    <subcellularLocation>
        <location evidence="1">Cytoplasm</location>
    </subcellularLocation>
</comment>
<comment type="similarity">
    <text evidence="1">Belongs to the Maf family. YhdE subfamily.</text>
</comment>
<name>NTPPA_BACP2</name>
<organism>
    <name type="scientific">Bacillus pumilus (strain SAFR-032)</name>
    <dbReference type="NCBI Taxonomy" id="315750"/>
    <lineage>
        <taxon>Bacteria</taxon>
        <taxon>Bacillati</taxon>
        <taxon>Bacillota</taxon>
        <taxon>Bacilli</taxon>
        <taxon>Bacillales</taxon>
        <taxon>Bacillaceae</taxon>
        <taxon>Bacillus</taxon>
    </lineage>
</organism>
<accession>A8FFU1</accession>
<proteinExistence type="inferred from homology"/>
<sequence length="189" mass="21058">MNQLILASQSPRRKELLDLAGFSYDIQASHLKEEINRNLSPAENVQWLAEQKANDIQRLNPKAVVIGADTIVAIDGKCLGKPKDKKEAAFMLQLLSGKTHQVLTGVTVQSENRKETFYEQTEVTFWTLTQNEIDRYIETGEPLDKAGSYGIQGKGALFVQKIDGDYFSVVGLPIAKTVRVLETFGITPF</sequence>
<feature type="chain" id="PRO_1000146283" description="dTTP/UTP pyrophosphatase">
    <location>
        <begin position="1"/>
        <end position="189"/>
    </location>
</feature>
<feature type="active site" description="Proton acceptor" evidence="1">
    <location>
        <position position="69"/>
    </location>
</feature>
<feature type="site" description="Important for substrate specificity" evidence="1">
    <location>
        <position position="12"/>
    </location>
</feature>
<feature type="site" description="Important for substrate specificity" evidence="1">
    <location>
        <position position="70"/>
    </location>
</feature>
<feature type="site" description="Important for substrate specificity" evidence="1">
    <location>
        <position position="152"/>
    </location>
</feature>
<protein>
    <recommendedName>
        <fullName evidence="1">dTTP/UTP pyrophosphatase</fullName>
        <shortName evidence="1">dTTPase/UTPase</shortName>
        <ecNumber evidence="1">3.6.1.9</ecNumber>
    </recommendedName>
    <alternativeName>
        <fullName evidence="1">Nucleoside triphosphate pyrophosphatase</fullName>
    </alternativeName>
    <alternativeName>
        <fullName evidence="1">Nucleotide pyrophosphatase</fullName>
        <shortName evidence="1">Nucleotide PPase</shortName>
    </alternativeName>
</protein>
<gene>
    <name type="primary">maf</name>
    <name type="ordered locus">BPUM_2445</name>
</gene>